<protein>
    <recommendedName>
        <fullName>Autoinducer 2 import system permease protein LsrD</fullName>
        <shortName>AI-2 import system permease protein LsrD</shortName>
    </recommendedName>
</protein>
<organism>
    <name type="scientific">Shigella flexneri serotype 5b (strain 8401)</name>
    <dbReference type="NCBI Taxonomy" id="373384"/>
    <lineage>
        <taxon>Bacteria</taxon>
        <taxon>Pseudomonadati</taxon>
        <taxon>Pseudomonadota</taxon>
        <taxon>Gammaproteobacteria</taxon>
        <taxon>Enterobacterales</taxon>
        <taxon>Enterobacteriaceae</taxon>
        <taxon>Shigella</taxon>
    </lineage>
</organism>
<evidence type="ECO:0000250" key="1"/>
<evidence type="ECO:0000255" key="2"/>
<evidence type="ECO:0000305" key="3"/>
<gene>
    <name type="primary">lsrD</name>
    <name type="ordered locus">SFV_1570</name>
</gene>
<keyword id="KW-0997">Cell inner membrane</keyword>
<keyword id="KW-1003">Cell membrane</keyword>
<keyword id="KW-0472">Membrane</keyword>
<keyword id="KW-0812">Transmembrane</keyword>
<keyword id="KW-1133">Transmembrane helix</keyword>
<keyword id="KW-0813">Transport</keyword>
<name>LSRD_SHIF8</name>
<reference key="1">
    <citation type="journal article" date="2006" name="BMC Genomics">
        <title>Complete genome sequence of Shigella flexneri 5b and comparison with Shigella flexneri 2a.</title>
        <authorList>
            <person name="Nie H."/>
            <person name="Yang F."/>
            <person name="Zhang X."/>
            <person name="Yang J."/>
            <person name="Chen L."/>
            <person name="Wang J."/>
            <person name="Xiong Z."/>
            <person name="Peng J."/>
            <person name="Sun L."/>
            <person name="Dong J."/>
            <person name="Xue Y."/>
            <person name="Xu X."/>
            <person name="Chen S."/>
            <person name="Yao Z."/>
            <person name="Shen Y."/>
            <person name="Jin Q."/>
        </authorList>
    </citation>
    <scope>NUCLEOTIDE SEQUENCE [LARGE SCALE GENOMIC DNA]</scope>
    <source>
        <strain>8401</strain>
    </source>
</reference>
<feature type="chain" id="PRO_0000351378" description="Autoinducer 2 import system permease protein LsrD">
    <location>
        <begin position="1"/>
        <end position="330"/>
    </location>
</feature>
<feature type="topological domain" description="Cytoplasmic" evidence="2">
    <location>
        <begin position="1"/>
        <end position="4"/>
    </location>
</feature>
<feature type="transmembrane region" description="Helical" evidence="2">
    <location>
        <begin position="5"/>
        <end position="25"/>
    </location>
</feature>
<feature type="topological domain" description="Periplasmic" evidence="2">
    <location>
        <begin position="26"/>
        <end position="42"/>
    </location>
</feature>
<feature type="transmembrane region" description="Helical" evidence="2">
    <location>
        <begin position="43"/>
        <end position="63"/>
    </location>
</feature>
<feature type="topological domain" description="Cytoplasmic" evidence="2">
    <location>
        <begin position="64"/>
        <end position="67"/>
    </location>
</feature>
<feature type="transmembrane region" description="Helical" evidence="2">
    <location>
        <begin position="68"/>
        <end position="88"/>
    </location>
</feature>
<feature type="transmembrane region" description="Helical" evidence="2">
    <location>
        <begin position="89"/>
        <end position="109"/>
    </location>
</feature>
<feature type="topological domain" description="Cytoplasmic" evidence="2">
    <location>
        <begin position="110"/>
        <end position="115"/>
    </location>
</feature>
<feature type="transmembrane region" description="Helical" evidence="2">
    <location>
        <begin position="116"/>
        <end position="136"/>
    </location>
</feature>
<feature type="topological domain" description="Periplasmic" evidence="2">
    <location>
        <begin position="137"/>
        <end position="159"/>
    </location>
</feature>
<feature type="transmembrane region" description="Helical" evidence="2">
    <location>
        <begin position="160"/>
        <end position="180"/>
    </location>
</feature>
<feature type="topological domain" description="Cytoplasmic" evidence="2">
    <location>
        <begin position="181"/>
        <end position="209"/>
    </location>
</feature>
<feature type="transmembrane region" description="Helical" evidence="2">
    <location>
        <begin position="210"/>
        <end position="230"/>
    </location>
</feature>
<feature type="topological domain" description="Periplasmic" evidence="2">
    <location>
        <begin position="231"/>
        <end position="237"/>
    </location>
</feature>
<feature type="transmembrane region" description="Helical" evidence="2">
    <location>
        <begin position="238"/>
        <end position="258"/>
    </location>
</feature>
<feature type="transmembrane region" description="Helical" evidence="2">
    <location>
        <begin position="259"/>
        <end position="279"/>
    </location>
</feature>
<feature type="topological domain" description="Periplasmic" evidence="2">
    <location>
        <begin position="280"/>
        <end position="285"/>
    </location>
</feature>
<feature type="transmembrane region" description="Helical" evidence="2">
    <location>
        <begin position="286"/>
        <end position="306"/>
    </location>
</feature>
<feature type="topological domain" description="Cytoplasmic" evidence="2">
    <location>
        <begin position="307"/>
        <end position="330"/>
    </location>
</feature>
<sequence>MRIRYGWELALAALLVIEIVAFGAINPRMLDLNMLLFSTSDFICIGIVALPLTMVIVSGGIDISFGSTIGLCAIALGVLFQSGVPMPLAILLTLLLGALCGLINAGLIIYTKVNPLVITLGTLYLFAGSALLLSGMAGATGYEGIGGFPMAFTDFANLDVLGLPVPLIIFLICLLVFWLWLHKTHAGRNVFLIGQSPRVALYSAIPVNRTLCALYAMTGLASAVAAVLLVSYFGSARSDLGASFLMPAITAVVLGGANIYGGSGSIIGTAIAVLLVGYLQQGLQMAGVPNQVSSALSGALLIVVVVGRSVSLHRQQIKEWLARRANNPLP</sequence>
<comment type="function">
    <text evidence="1">Part of the ABC transporter complex LsrABCD involved in autoinducer 2 (AI-2) import. Probably responsible for the translocation of the substrate across the membrane (By similarity).</text>
</comment>
<comment type="subunit">
    <text evidence="1">The complex is composed of two ATP-binding proteins (LsrA), two transmembrane proteins (LsrC and LsrD) and a solute-binding protein (LsrB).</text>
</comment>
<comment type="subcellular location">
    <subcellularLocation>
        <location evidence="1">Cell inner membrane</location>
        <topology evidence="1">Multi-pass membrane protein</topology>
    </subcellularLocation>
</comment>
<comment type="similarity">
    <text evidence="3">Belongs to the binding-protein-dependent transport system permease family. AraH/RbsC subfamily.</text>
</comment>
<accession>Q0T4L7</accession>
<proteinExistence type="inferred from homology"/>
<dbReference type="EMBL" id="CP000266">
    <property type="protein sequence ID" value="ABF03748.1"/>
    <property type="molecule type" value="Genomic_DNA"/>
</dbReference>
<dbReference type="RefSeq" id="WP_001222721.1">
    <property type="nucleotide sequence ID" value="NC_008258.1"/>
</dbReference>
<dbReference type="GeneID" id="75202157"/>
<dbReference type="KEGG" id="sfv:SFV_1570"/>
<dbReference type="HOGENOM" id="CLU_028880_0_0_6"/>
<dbReference type="Proteomes" id="UP000000659">
    <property type="component" value="Chromosome"/>
</dbReference>
<dbReference type="GO" id="GO:0005886">
    <property type="term" value="C:plasma membrane"/>
    <property type="evidence" value="ECO:0007669"/>
    <property type="project" value="UniProtKB-SubCell"/>
</dbReference>
<dbReference type="GO" id="GO:0022857">
    <property type="term" value="F:transmembrane transporter activity"/>
    <property type="evidence" value="ECO:0007669"/>
    <property type="project" value="InterPro"/>
</dbReference>
<dbReference type="CDD" id="cd06579">
    <property type="entry name" value="TM_PBP1_transp_AraH_like"/>
    <property type="match status" value="1"/>
</dbReference>
<dbReference type="InterPro" id="IPR001851">
    <property type="entry name" value="ABC_transp_permease"/>
</dbReference>
<dbReference type="NCBIfam" id="NF011612">
    <property type="entry name" value="PRK15038.1"/>
    <property type="match status" value="1"/>
</dbReference>
<dbReference type="PANTHER" id="PTHR32196">
    <property type="entry name" value="ABC TRANSPORTER PERMEASE PROTEIN YPHD-RELATED-RELATED"/>
    <property type="match status" value="1"/>
</dbReference>
<dbReference type="PANTHER" id="PTHR32196:SF71">
    <property type="entry name" value="AUTOINDUCER 2 IMPORT SYSTEM PERMEASE PROTEIN LSRD"/>
    <property type="match status" value="1"/>
</dbReference>
<dbReference type="Pfam" id="PF02653">
    <property type="entry name" value="BPD_transp_2"/>
    <property type="match status" value="1"/>
</dbReference>